<proteinExistence type="evidence at protein level"/>
<accession>P0DQL1</accession>
<name>OCE2_LEPLD</name>
<keyword id="KW-0027">Amidation</keyword>
<keyword id="KW-0878">Amphibian defense peptide</keyword>
<keyword id="KW-0903">Direct protein sequencing</keyword>
<keyword id="KW-0391">Immunity</keyword>
<keyword id="KW-0399">Innate immunity</keyword>
<keyword id="KW-0964">Secreted</keyword>
<organism>
    <name type="scientific">Leptodactylus laticeps</name>
    <name type="common">Santa Fe frog</name>
    <dbReference type="NCBI Taxonomy" id="1615745"/>
    <lineage>
        <taxon>Eukaryota</taxon>
        <taxon>Metazoa</taxon>
        <taxon>Chordata</taxon>
        <taxon>Craniata</taxon>
        <taxon>Vertebrata</taxon>
        <taxon>Euteleostomi</taxon>
        <taxon>Amphibia</taxon>
        <taxon>Batrachia</taxon>
        <taxon>Anura</taxon>
        <taxon>Neobatrachia</taxon>
        <taxon>Hyloidea</taxon>
        <taxon>Leptodactylidae</taxon>
        <taxon>Leptodactylinae</taxon>
        <taxon>Leptodactylus</taxon>
    </lineage>
</organism>
<comment type="function">
    <text evidence="1">Shows a low activity in stimulating insulin release from rat BRIN-BD11 beta cells, and acts without loss of integrity of the plasma membrane (PubMed:19428765). Does not show antibacterial (E.coli and S.aureus) (PubMed:19428765). Does not show hemolytic activity against human erythrocytes (PubMed:19428765).</text>
</comment>
<comment type="subcellular location">
    <subcellularLocation>
        <location evidence="1">Secreted</location>
    </subcellularLocation>
</comment>
<comment type="tissue specificity">
    <text evidence="4">Expressed by the skin glands.</text>
</comment>
<comment type="mass spectrometry">
    <text>Monoisotopic mass.</text>
</comment>
<comment type="similarity">
    <text evidence="3">Belongs to the frog skin active peptide (FSAP) family. Ocellatin subfamily.</text>
</comment>
<comment type="caution">
    <text evidence="3">Ocellatin-L2 may be a Asn-23 deaminated form of Ocellatin-L1. Since both peptides do not have the same antibacterial activity, they are kept in two separate entries.</text>
</comment>
<feature type="peptide" id="PRO_0000449666" description="Ocellatin-L2" evidence="1">
    <location>
        <begin position="1"/>
        <end position="25"/>
    </location>
</feature>
<feature type="modified residue" description="Leucine amide" evidence="1">
    <location>
        <position position="25"/>
    </location>
</feature>
<protein>
    <recommendedName>
        <fullName evidence="2">Ocellatin-L2</fullName>
    </recommendedName>
</protein>
<evidence type="ECO:0000269" key="1">
    <source>
    </source>
</evidence>
<evidence type="ECO:0000303" key="2">
    <source>
    </source>
</evidence>
<evidence type="ECO:0000305" key="3"/>
<evidence type="ECO:0000305" key="4">
    <source>
    </source>
</evidence>
<sequence>GVVDILKGAAKDLAGHLATKVMDKL</sequence>
<dbReference type="SMR" id="P0DQL1"/>
<dbReference type="GO" id="GO:0005576">
    <property type="term" value="C:extracellular region"/>
    <property type="evidence" value="ECO:0007669"/>
    <property type="project" value="UniProtKB-SubCell"/>
</dbReference>
<dbReference type="GO" id="GO:0045087">
    <property type="term" value="P:innate immune response"/>
    <property type="evidence" value="ECO:0007669"/>
    <property type="project" value="UniProtKB-KW"/>
</dbReference>
<dbReference type="GO" id="GO:0019836">
    <property type="term" value="P:symbiont-mediated hemolysis of host erythrocyte"/>
    <property type="evidence" value="ECO:0007669"/>
    <property type="project" value="InterPro"/>
</dbReference>
<dbReference type="InterPro" id="IPR012518">
    <property type="entry name" value="Antimicrobial15"/>
</dbReference>
<dbReference type="Pfam" id="PF08110">
    <property type="entry name" value="Antimicrobial15"/>
    <property type="match status" value="1"/>
</dbReference>
<reference key="1">
    <citation type="journal article" date="2009" name="Peptides">
        <title>A glycine-leucine-rich peptide structurally related to the plasticins from skin secretions of the frog Leptodactylus laticeps (Leptodactylidae).</title>
        <authorList>
            <person name="Conlon J.M."/>
            <person name="Abdel-Wahab Y.H."/>
            <person name="Flatt P.R."/>
            <person name="Leprince J."/>
            <person name="Vaudry H."/>
            <person name="Jouenne T."/>
            <person name="Condamine E."/>
        </authorList>
    </citation>
    <scope>PROTEIN SEQUENCE</scope>
    <scope>FUNCTION</scope>
    <scope>SYNTHESIS</scope>
    <scope>SUBCELLULAR LOCATION</scope>
    <scope>MASS SPECTROMETRY</scope>
    <scope>AMIDATION AT LEU-25</scope>
    <source>
        <tissue>Skin secretion</tissue>
    </source>
</reference>